<gene>
    <name evidence="1" type="primary">cobT</name>
    <name type="ordered locus">Rsph17025_1056</name>
</gene>
<sequence>MKAPFTSLAGFRAVFDALPQPDAAALEAATARNGQLTKPKGALGRLEGLAIWYAGWVGDGRPALERPQVAIFAGNHGIAARGVSAFPPEVTVQMVANYRAGGAAVNQLCKVAGASMTVTELDLDRPTLDFTQGPAMTEDELVAALAAGWEAVEDEADLLVVGEMGIGNTTAAAAIAAALFGGSAGEWTGRGSGVEGAALEGKTLVVAQGLERHAEALSDPVEVLRRLGGRELAAMAGAIARARVGRIPVILDGFICSAAAAVLHAIRPGALDHAVAGHVSAEGAHPAVLARLGKEPILELGMRLGEGTGAIVAINILRSAVACLSGMATFAEAGVAEG</sequence>
<dbReference type="EC" id="2.4.2.21" evidence="1"/>
<dbReference type="EMBL" id="CP000661">
    <property type="protein sequence ID" value="ABP69957.1"/>
    <property type="molecule type" value="Genomic_DNA"/>
</dbReference>
<dbReference type="SMR" id="A4WRE3"/>
<dbReference type="STRING" id="349102.Rsph17025_1056"/>
<dbReference type="KEGG" id="rsq:Rsph17025_1056"/>
<dbReference type="eggNOG" id="COG2038">
    <property type="taxonomic scope" value="Bacteria"/>
</dbReference>
<dbReference type="HOGENOM" id="CLU_002982_0_1_5"/>
<dbReference type="BioCyc" id="RSPH349102:G1G8M-1082-MONOMER"/>
<dbReference type="UniPathway" id="UPA00061">
    <property type="reaction ID" value="UER00516"/>
</dbReference>
<dbReference type="GO" id="GO:0008939">
    <property type="term" value="F:nicotinate-nucleotide-dimethylbenzimidazole phosphoribosyltransferase activity"/>
    <property type="evidence" value="ECO:0007669"/>
    <property type="project" value="UniProtKB-UniRule"/>
</dbReference>
<dbReference type="GO" id="GO:0009236">
    <property type="term" value="P:cobalamin biosynthetic process"/>
    <property type="evidence" value="ECO:0007669"/>
    <property type="project" value="UniProtKB-KW"/>
</dbReference>
<dbReference type="CDD" id="cd02439">
    <property type="entry name" value="DMB-PRT_CobT"/>
    <property type="match status" value="1"/>
</dbReference>
<dbReference type="Gene3D" id="1.10.1610.10">
    <property type="match status" value="1"/>
</dbReference>
<dbReference type="Gene3D" id="3.40.50.10210">
    <property type="match status" value="1"/>
</dbReference>
<dbReference type="HAMAP" id="MF_00230">
    <property type="entry name" value="CobT"/>
    <property type="match status" value="1"/>
</dbReference>
<dbReference type="InterPro" id="IPR003200">
    <property type="entry name" value="Nict_dMeBzImd_PRibTrfase"/>
</dbReference>
<dbReference type="InterPro" id="IPR017846">
    <property type="entry name" value="Nict_dMeBzImd_PRibTrfase_bact"/>
</dbReference>
<dbReference type="InterPro" id="IPR023195">
    <property type="entry name" value="Nict_dMeBzImd_PRibTrfase_N"/>
</dbReference>
<dbReference type="InterPro" id="IPR036087">
    <property type="entry name" value="Nict_dMeBzImd_PRibTrfase_sf"/>
</dbReference>
<dbReference type="NCBIfam" id="TIGR03160">
    <property type="entry name" value="cobT_DBIPRT"/>
    <property type="match status" value="1"/>
</dbReference>
<dbReference type="NCBIfam" id="NF000996">
    <property type="entry name" value="PRK00105.1"/>
    <property type="match status" value="1"/>
</dbReference>
<dbReference type="PANTHER" id="PTHR43463">
    <property type="entry name" value="NICOTINATE-NUCLEOTIDE--DIMETHYLBENZIMIDAZOLE PHOSPHORIBOSYLTRANSFERASE"/>
    <property type="match status" value="1"/>
</dbReference>
<dbReference type="PANTHER" id="PTHR43463:SF1">
    <property type="entry name" value="NICOTINATE-NUCLEOTIDE--DIMETHYLBENZIMIDAZOLE PHOSPHORIBOSYLTRANSFERASE"/>
    <property type="match status" value="1"/>
</dbReference>
<dbReference type="Pfam" id="PF02277">
    <property type="entry name" value="DBI_PRT"/>
    <property type="match status" value="1"/>
</dbReference>
<dbReference type="SUPFAM" id="SSF52733">
    <property type="entry name" value="Nicotinate mononucleotide:5,6-dimethylbenzimidazole phosphoribosyltransferase (CobT)"/>
    <property type="match status" value="1"/>
</dbReference>
<name>COBT_CERS5</name>
<reference key="1">
    <citation type="submission" date="2007-04" db="EMBL/GenBank/DDBJ databases">
        <title>Complete sequence of chromosome of Rhodobacter sphaeroides ATCC 17025.</title>
        <authorList>
            <consortium name="US DOE Joint Genome Institute"/>
            <person name="Copeland A."/>
            <person name="Lucas S."/>
            <person name="Lapidus A."/>
            <person name="Barry K."/>
            <person name="Detter J.C."/>
            <person name="Glavina del Rio T."/>
            <person name="Hammon N."/>
            <person name="Israni S."/>
            <person name="Dalin E."/>
            <person name="Tice H."/>
            <person name="Pitluck S."/>
            <person name="Chertkov O."/>
            <person name="Brettin T."/>
            <person name="Bruce D."/>
            <person name="Han C."/>
            <person name="Schmutz J."/>
            <person name="Larimer F."/>
            <person name="Land M."/>
            <person name="Hauser L."/>
            <person name="Kyrpides N."/>
            <person name="Kim E."/>
            <person name="Richardson P."/>
            <person name="Mackenzie C."/>
            <person name="Choudhary M."/>
            <person name="Donohue T.J."/>
            <person name="Kaplan S."/>
        </authorList>
    </citation>
    <scope>NUCLEOTIDE SEQUENCE [LARGE SCALE GENOMIC DNA]</scope>
    <source>
        <strain>ATCC 17025 / ATH 2.4.3</strain>
    </source>
</reference>
<accession>A4WRE3</accession>
<evidence type="ECO:0000255" key="1">
    <source>
        <dbReference type="HAMAP-Rule" id="MF_00230"/>
    </source>
</evidence>
<proteinExistence type="inferred from homology"/>
<organism>
    <name type="scientific">Cereibacter sphaeroides (strain ATCC 17025 / ATH 2.4.3)</name>
    <name type="common">Rhodobacter sphaeroides</name>
    <dbReference type="NCBI Taxonomy" id="349102"/>
    <lineage>
        <taxon>Bacteria</taxon>
        <taxon>Pseudomonadati</taxon>
        <taxon>Pseudomonadota</taxon>
        <taxon>Alphaproteobacteria</taxon>
        <taxon>Rhodobacterales</taxon>
        <taxon>Paracoccaceae</taxon>
        <taxon>Cereibacter</taxon>
    </lineage>
</organism>
<feature type="chain" id="PRO_1000058769" description="Nicotinate-nucleotide--dimethylbenzimidazole phosphoribosyltransferase">
    <location>
        <begin position="1"/>
        <end position="338"/>
    </location>
</feature>
<feature type="active site" description="Proton acceptor" evidence="1">
    <location>
        <position position="306"/>
    </location>
</feature>
<protein>
    <recommendedName>
        <fullName evidence="1">Nicotinate-nucleotide--dimethylbenzimidazole phosphoribosyltransferase</fullName>
        <shortName evidence="1">NN:DBI PRT</shortName>
        <ecNumber evidence="1">2.4.2.21</ecNumber>
    </recommendedName>
    <alternativeName>
        <fullName evidence="1">N(1)-alpha-phosphoribosyltransferase</fullName>
    </alternativeName>
</protein>
<keyword id="KW-0169">Cobalamin biosynthesis</keyword>
<keyword id="KW-0328">Glycosyltransferase</keyword>
<keyword id="KW-0808">Transferase</keyword>
<comment type="function">
    <text evidence="1">Catalyzes the synthesis of alpha-ribazole-5'-phosphate from nicotinate mononucleotide (NAMN) and 5,6-dimethylbenzimidazole (DMB).</text>
</comment>
<comment type="catalytic activity">
    <reaction evidence="1">
        <text>5,6-dimethylbenzimidazole + nicotinate beta-D-ribonucleotide = alpha-ribazole 5'-phosphate + nicotinate + H(+)</text>
        <dbReference type="Rhea" id="RHEA:11196"/>
        <dbReference type="ChEBI" id="CHEBI:15378"/>
        <dbReference type="ChEBI" id="CHEBI:15890"/>
        <dbReference type="ChEBI" id="CHEBI:32544"/>
        <dbReference type="ChEBI" id="CHEBI:57502"/>
        <dbReference type="ChEBI" id="CHEBI:57918"/>
        <dbReference type="EC" id="2.4.2.21"/>
    </reaction>
</comment>
<comment type="pathway">
    <text evidence="1">Nucleoside biosynthesis; alpha-ribazole biosynthesis; alpha-ribazole from 5,6-dimethylbenzimidazole: step 1/2.</text>
</comment>
<comment type="similarity">
    <text evidence="1">Belongs to the CobT family.</text>
</comment>